<organism>
    <name type="scientific">Mus musculus</name>
    <name type="common">Mouse</name>
    <dbReference type="NCBI Taxonomy" id="10090"/>
    <lineage>
        <taxon>Eukaryota</taxon>
        <taxon>Metazoa</taxon>
        <taxon>Chordata</taxon>
        <taxon>Craniata</taxon>
        <taxon>Vertebrata</taxon>
        <taxon>Euteleostomi</taxon>
        <taxon>Mammalia</taxon>
        <taxon>Eutheria</taxon>
        <taxon>Euarchontoglires</taxon>
        <taxon>Glires</taxon>
        <taxon>Rodentia</taxon>
        <taxon>Myomorpha</taxon>
        <taxon>Muroidea</taxon>
        <taxon>Muridae</taxon>
        <taxon>Murinae</taxon>
        <taxon>Mus</taxon>
        <taxon>Mus</taxon>
    </lineage>
</organism>
<accession>Q1PSW8</accession>
<evidence type="ECO:0000250" key="1">
    <source>
        <dbReference type="UniProtKB" id="Q2Q1W2"/>
    </source>
</evidence>
<evidence type="ECO:0000255" key="2"/>
<evidence type="ECO:0000255" key="3">
    <source>
        <dbReference type="PROSITE-ProRule" id="PRU00024"/>
    </source>
</evidence>
<evidence type="ECO:0000255" key="4">
    <source>
        <dbReference type="PROSITE-ProRule" id="PRU00175"/>
    </source>
</evidence>
<evidence type="ECO:0000256" key="5">
    <source>
        <dbReference type="SAM" id="MobiDB-lite"/>
    </source>
</evidence>
<evidence type="ECO:0000269" key="6">
    <source>
    </source>
</evidence>
<evidence type="ECO:0000269" key="7">
    <source>
    </source>
</evidence>
<evidence type="ECO:0000269" key="8">
    <source>
    </source>
</evidence>
<evidence type="ECO:0000269" key="9">
    <source>
    </source>
</evidence>
<evidence type="ECO:0000269" key="10">
    <source>
    </source>
</evidence>
<evidence type="ECO:0000269" key="11">
    <source>
    </source>
</evidence>
<evidence type="ECO:0000269" key="12">
    <source>
    </source>
</evidence>
<evidence type="ECO:0000269" key="13">
    <source>
    </source>
</evidence>
<evidence type="ECO:0000305" key="14"/>
<evidence type="ECO:0000305" key="15">
    <source>
    </source>
</evidence>
<evidence type="ECO:0000305" key="16">
    <source>
    </source>
</evidence>
<evidence type="ECO:0000305" key="17">
    <source>
    </source>
</evidence>
<evidence type="ECO:0007829" key="18">
    <source>
        <dbReference type="PDB" id="8J72"/>
    </source>
</evidence>
<protein>
    <recommendedName>
        <fullName>E3 ubiquitin-protein ligase TRIM71</fullName>
        <ecNumber>2.3.2.27</ecNumber>
    </recommendedName>
    <alternativeName>
        <fullName>Protein lin-41 homolog</fullName>
        <shortName>mLin41</shortName>
    </alternativeName>
    <alternativeName>
        <fullName evidence="14">RING-type E3 ubiquitin transferase TRIM71</fullName>
    </alternativeName>
    <alternativeName>
        <fullName>Tripartite motif-containing protein 71</fullName>
    </alternativeName>
</protein>
<comment type="function">
    <text evidence="1 9 11 12">E3 ubiquitin-protein ligase that cooperates with the microRNAs (miRNAs) machinery and promotes embryonic stem cells proliferation and maintenance (PubMed:19898466). Binds to miRNAs and associates with AGO2, participating in post-transcriptional repression of transcripts such as CDKN1A. Facilitates the G1-S transition to promote rapid embryonic stem cell self-renewal by repressing CDKN1A expression (PubMed:22735451). In addition, participates in post-transcriptional mRNA repression in a miRNA independent mechanism (PubMed:23125361). Required to maintain proliferation and prevent premature differentiation of neural progenitor cells during early neural development: positively regulates FGF signaling by controlling the stability of SHCBP1 (PubMed:22735451). Specific regulator of miRNA biogenesis. miRNA Binds MIR29A hairpin and postranscriptionally modulates MIR29A levels, which indirectly regulates TET proteins expression (By similarity).</text>
</comment>
<comment type="catalytic activity">
    <reaction>
        <text>S-ubiquitinyl-[E2 ubiquitin-conjugating enzyme]-L-cysteine + [acceptor protein]-L-lysine = [E2 ubiquitin-conjugating enzyme]-L-cysteine + N(6)-ubiquitinyl-[acceptor protein]-L-lysine.</text>
        <dbReference type="EC" id="2.3.2.27"/>
    </reaction>
</comment>
<comment type="pathway">
    <text>Protein modification; protein ubiquitination.</text>
</comment>
<comment type="subunit">
    <text evidence="1 9 10 11">Interacts (via NHL repeats) with AGO2; the interaction increases in presence of RNA (PubMed:19898466, PubMed:22508726, PubMed:22735451). Interacts with HSP90AA1. Interacts (via NHL repeats) with MOV10, PABPC1, PUM1, PUM2, STAU2, XRN1 and XRN2 in an RNA-dependent manner (By similarity). Interacts with SHCBP1; leading to enhance its stability (PubMed:22508726).</text>
</comment>
<comment type="subcellular location">
    <subcellularLocation>
        <location evidence="9 10 11">Cytoplasm</location>
        <location evidence="9 10 11">P-body</location>
    </subcellularLocation>
</comment>
<comment type="tissue specificity">
    <text evidence="9 10 11 13">Highly expressed in undifferentiated embryonic stem cells (ESCs). Expressed in the epiblast and in interfollicular epidermal stem cells during early development. Also expressed in male germ cells and in the reproductive tract. Highly expressed in neuroepithelial cells, and its expression declines as neurogenesis proceeds (at protein level). Expressed in ependymal cells of the brain (PubMed:25883935).</text>
</comment>
<comment type="developmental stage">
    <text evidence="6 7 13">Expression is first detected at 8.5 dpc, increases to highest levels at 14.5 dpc and remains elevated through the newborn stage. Expressed in developing limb buds and tail buds starting from 9.5 dpc. At 9.5 dpc, expression is prominent in the entire embryo, with the exception of the primordial cardiac sac. At 10.5 dpc, expression reduces to the neuroepithelium, branchial arches, spinal cord, somites, limb, and tail buds. At the onset of central nervous system development, the neuroepithelium shows a prominent staining between 9.5 dpc and 10.5 dpc. Thereafter, expression is unevenly distributed in a progressively thinner layer along the inner surface of the ventricle. Expression is intense at the bumps corresponding to the nascent limb buds around 10.5 dpc. Shortly thereafter, as the limb buds emerge from the body and expand, expression declines and is limited to the most distal surface at 12.5 dpc. At 13.5 dpc it is no longer possible to identify expression in either the developing nervous system, the limb or the tail buds. From postnatal day 10 (P10) to the adulthood, expressed in cells lining the wall of the four ventricles of the postnatal brain (PubMed:25883935).</text>
</comment>
<comment type="induction">
    <text evidence="11">Negatively regulated by the microRNA (miRNA) let-7 which causes degradation of the mRNA encoding this protein. This requires a let-7 complementary site (LCS) in the 3'-UTR of the mRNA encoding this protein.</text>
</comment>
<comment type="domain">
    <text evidence="1">The NHL domain, containing the 6 NHL repeats, is necessary and sufficient to target RNA but not to repress mRNA. The minimal region needed to execute repression consists of the coiled coil domain and the Filamin repeat. The RING-type domain is dispensable for mRNA repression.</text>
</comment>
<comment type="PTM">
    <text evidence="10">Autoubiquitinated.</text>
</comment>
<comment type="disruption phenotype">
    <text evidence="8 10 13">Embryonic lethality at 9.5 dpc, due to a neural tube closure defect in the anterior craniofacial region of the neural tube, corresponding to the forebrain/midbrain boundary. Reduced cell proliferation in the neuroepithelium.</text>
</comment>
<comment type="similarity">
    <text evidence="14">Belongs to the TRIM/RBCC family.</text>
</comment>
<comment type="caution">
    <text evidence="15 16 17">Reported to mediate ubiquitination and subsequent degradation of AGO2 (PubMed:19898466). However, this result is subject to discussion and later reports suggest that, while it interacts with AGO2, it is not involved in AGO2 ubiquitination (PubMed:22508726, PubMed:22735451).</text>
</comment>
<sequence>MASFPETDFQICLLCKEMCGSPAPLSSNSSASSSSSQTSTSSAGGGGPGAAARRLHVLPCLHAFCRPCLEAHRLPAPGGAGPAEALKLRCPVCDQKVVLAEAAGMDALPSSAFLLSNLLDAVVATAEEPPPKNGRAGGGPGGAGGHSNHRHHAHHPAQRAAAPAPQPPPGPAASPGSLLMRRPHGCSSCDEGNAASSRCLDCQEHLCDNCVRAHQRVRLTKDHYIERGPPGPAAASAAQQLGLGPPFAGAPFSILSVFPERLGFCQHHDDEVLHLYCDTCSVPICRECTLGRHGGHSFAYLQDALQDSRALTIQLLADAQQGRQALQLSIEQAQTVAEQVEMKAKVVQSEVKAVTARHKKALEDRECELLWKVEKIRQVKAKSLFLQVEKLRQSLSKLESTISAVQQVLEEGRALDILLARDRMLAQVQELKTIRGLLQPQEDDRIMFTPPDQALYLALKSIGFVSSGAFAPLTKATGDGIKRALQGKVASFTVMGYDHDGEPRHSGGDLMSVVVLGPDGNLFGAEVSDQQNGTYIVSYRPQLEGEHLVSVTLYNQHIENSPFKVVVKSGRSYVGIGLPGLSFGSEGDGEGKLCRPWGVSVDKEGFIIVADRSNNRIQVFKPCGSFHHKFGTLGSRPGQFDRPAGVACDASRRIIVADKDNHRIQIFTFEGQFLLKFGEKGTKNGQFNYPWDVAVNSEGKILVSDTRNHRIQLFGPDGVFLNKYGFEGSLWKHFDSPRGVAFNNEGHLVVTDFNNHRLLVIHPDCQSARFLGSEGSGNGQFLRPQGVAVDQEGRIIVADSRNHRVQMFEANGSFLCKFGAQGSGFGQMDRPSGIAVTPDGLIVVVDFGNNRILIF</sequence>
<dbReference type="EC" id="2.3.2.27"/>
<dbReference type="EMBL" id="DQ005956">
    <property type="protein sequence ID" value="AAY55947.1"/>
    <property type="molecule type" value="mRNA"/>
</dbReference>
<dbReference type="CCDS" id="CCDS40793.1"/>
<dbReference type="RefSeq" id="NP_001035968.1">
    <property type="nucleotide sequence ID" value="NM_001042503.2"/>
</dbReference>
<dbReference type="PDB" id="8J72">
    <property type="method" value="X-ray"/>
    <property type="resolution" value="3.16 A"/>
    <property type="chains" value="A/B=575-855"/>
</dbReference>
<dbReference type="PDBsum" id="8J72"/>
<dbReference type="SMR" id="Q1PSW8"/>
<dbReference type="BioGRID" id="561929">
    <property type="interactions" value="10"/>
</dbReference>
<dbReference type="FunCoup" id="Q1PSW8">
    <property type="interactions" value="52"/>
</dbReference>
<dbReference type="STRING" id="10090.ENSMUSP00000107447"/>
<dbReference type="GlyGen" id="Q1PSW8">
    <property type="glycosylation" value="1 site, 1 O-linked glycan (1 site)"/>
</dbReference>
<dbReference type="iPTMnet" id="Q1PSW8"/>
<dbReference type="PhosphoSitePlus" id="Q1PSW8"/>
<dbReference type="PaxDb" id="10090-ENSMUSP00000107447"/>
<dbReference type="PeptideAtlas" id="Q1PSW8"/>
<dbReference type="ProteomicsDB" id="292260"/>
<dbReference type="Antibodypedia" id="45336">
    <property type="antibodies" value="180 antibodies from 32 providers"/>
</dbReference>
<dbReference type="Ensembl" id="ENSMUST00000111816.3">
    <property type="protein sequence ID" value="ENSMUSP00000107447.2"/>
    <property type="gene ID" value="ENSMUSG00000079259.3"/>
</dbReference>
<dbReference type="GeneID" id="636931"/>
<dbReference type="KEGG" id="mmu:636931"/>
<dbReference type="UCSC" id="uc009rxp.1">
    <property type="organism name" value="mouse"/>
</dbReference>
<dbReference type="AGR" id="MGI:2685973"/>
<dbReference type="CTD" id="131405"/>
<dbReference type="MGI" id="MGI:2685973">
    <property type="gene designation" value="Trim71"/>
</dbReference>
<dbReference type="VEuPathDB" id="HostDB:ENSMUSG00000079259"/>
<dbReference type="eggNOG" id="KOG2177">
    <property type="taxonomic scope" value="Eukaryota"/>
</dbReference>
<dbReference type="GeneTree" id="ENSGT00940000159099"/>
<dbReference type="HOGENOM" id="CLU_008645_4_1_1"/>
<dbReference type="InParanoid" id="Q1PSW8"/>
<dbReference type="OMA" id="WKQFDSP"/>
<dbReference type="OrthoDB" id="342730at2759"/>
<dbReference type="PhylomeDB" id="Q1PSW8"/>
<dbReference type="TreeFam" id="TF331018"/>
<dbReference type="Reactome" id="R-MMU-983168">
    <property type="pathway name" value="Antigen processing: Ubiquitination &amp; Proteasome degradation"/>
</dbReference>
<dbReference type="UniPathway" id="UPA00143"/>
<dbReference type="BioGRID-ORCS" id="636931">
    <property type="hits" value="1 hit in 80 CRISPR screens"/>
</dbReference>
<dbReference type="ChiTaRS" id="Trim71">
    <property type="organism name" value="mouse"/>
</dbReference>
<dbReference type="PRO" id="PR:Q1PSW8"/>
<dbReference type="Proteomes" id="UP000000589">
    <property type="component" value="Chromosome 9"/>
</dbReference>
<dbReference type="RNAct" id="Q1PSW8">
    <property type="molecule type" value="protein"/>
</dbReference>
<dbReference type="Bgee" id="ENSMUSG00000079259">
    <property type="expression patterns" value="Expressed in primitive streak and 71 other cell types or tissues"/>
</dbReference>
<dbReference type="GO" id="GO:0000932">
    <property type="term" value="C:P-body"/>
    <property type="evidence" value="ECO:0000314"/>
    <property type="project" value="UniProtKB"/>
</dbReference>
<dbReference type="GO" id="GO:0035198">
    <property type="term" value="F:miRNA binding"/>
    <property type="evidence" value="ECO:0000314"/>
    <property type="project" value="UniProtKB"/>
</dbReference>
<dbReference type="GO" id="GO:0030371">
    <property type="term" value="F:translation repressor activity"/>
    <property type="evidence" value="ECO:0007669"/>
    <property type="project" value="Ensembl"/>
</dbReference>
<dbReference type="GO" id="GO:0061630">
    <property type="term" value="F:ubiquitin protein ligase activity"/>
    <property type="evidence" value="ECO:0000314"/>
    <property type="project" value="MGI"/>
</dbReference>
<dbReference type="GO" id="GO:0004842">
    <property type="term" value="F:ubiquitin-protein transferase activity"/>
    <property type="evidence" value="ECO:0000314"/>
    <property type="project" value="UniProtKB"/>
</dbReference>
<dbReference type="GO" id="GO:0008270">
    <property type="term" value="F:zinc ion binding"/>
    <property type="evidence" value="ECO:0007669"/>
    <property type="project" value="UniProtKB-KW"/>
</dbReference>
<dbReference type="GO" id="GO:0061158">
    <property type="term" value="P:3'-UTR-mediated mRNA destabilization"/>
    <property type="evidence" value="ECO:0007669"/>
    <property type="project" value="Ensembl"/>
</dbReference>
<dbReference type="GO" id="GO:0008543">
    <property type="term" value="P:fibroblast growth factor receptor signaling pathway"/>
    <property type="evidence" value="ECO:0000315"/>
    <property type="project" value="UniProtKB"/>
</dbReference>
<dbReference type="GO" id="GO:0000082">
    <property type="term" value="P:G1/S transition of mitotic cell cycle"/>
    <property type="evidence" value="ECO:0000315"/>
    <property type="project" value="UniProtKB"/>
</dbReference>
<dbReference type="GO" id="GO:0035196">
    <property type="term" value="P:miRNA processing"/>
    <property type="evidence" value="ECO:0000250"/>
    <property type="project" value="UniProtKB"/>
</dbReference>
<dbReference type="GO" id="GO:0035278">
    <property type="term" value="P:miRNA-mediated gene silencing by inhibition of translation"/>
    <property type="evidence" value="ECO:0000315"/>
    <property type="project" value="UniProtKB"/>
</dbReference>
<dbReference type="GO" id="GO:0001843">
    <property type="term" value="P:neural tube closure"/>
    <property type="evidence" value="ECO:0000315"/>
    <property type="project" value="MGI"/>
</dbReference>
<dbReference type="GO" id="GO:0021915">
    <property type="term" value="P:neural tube development"/>
    <property type="evidence" value="ECO:0000314"/>
    <property type="project" value="UniProtKB"/>
</dbReference>
<dbReference type="GO" id="GO:2000637">
    <property type="term" value="P:positive regulation of miRNA-mediated gene silencing"/>
    <property type="evidence" value="ECO:0000314"/>
    <property type="project" value="MGI"/>
</dbReference>
<dbReference type="GO" id="GO:0051865">
    <property type="term" value="P:protein autoubiquitination"/>
    <property type="evidence" value="ECO:0000314"/>
    <property type="project" value="UniProtKB"/>
</dbReference>
<dbReference type="GO" id="GO:0060964">
    <property type="term" value="P:regulation of miRNA-mediated gene silencing"/>
    <property type="evidence" value="ECO:0000316"/>
    <property type="project" value="MGI"/>
</dbReference>
<dbReference type="GO" id="GO:2000177">
    <property type="term" value="P:regulation of neural precursor cell proliferation"/>
    <property type="evidence" value="ECO:0000315"/>
    <property type="project" value="UniProtKB"/>
</dbReference>
<dbReference type="GO" id="GO:0051246">
    <property type="term" value="P:regulation of protein metabolic process"/>
    <property type="evidence" value="ECO:0000314"/>
    <property type="project" value="MGI"/>
</dbReference>
<dbReference type="GO" id="GO:0072089">
    <property type="term" value="P:stem cell proliferation"/>
    <property type="evidence" value="ECO:0000315"/>
    <property type="project" value="UniProtKB"/>
</dbReference>
<dbReference type="CDD" id="cd19812">
    <property type="entry name" value="Bbox1_TRIM71_C-VII"/>
    <property type="match status" value="1"/>
</dbReference>
<dbReference type="CDD" id="cd19796">
    <property type="entry name" value="Bbox2_TRIM71_C-VII"/>
    <property type="match status" value="1"/>
</dbReference>
<dbReference type="CDD" id="cd14954">
    <property type="entry name" value="NHL_TRIM71_like"/>
    <property type="match status" value="1"/>
</dbReference>
<dbReference type="CDD" id="cd16589">
    <property type="entry name" value="RING-HC_TRIM71_C-VII"/>
    <property type="match status" value="1"/>
</dbReference>
<dbReference type="FunFam" id="2.120.10.30:FF:000013">
    <property type="entry name" value="E3 ubiquitin-protein ligase TRIM71"/>
    <property type="match status" value="1"/>
</dbReference>
<dbReference type="FunFam" id="2.120.10.30:FF:000025">
    <property type="entry name" value="E3 ubiquitin-protein ligase TRIM71"/>
    <property type="match status" value="1"/>
</dbReference>
<dbReference type="FunFam" id="2.120.10.30:FF:000080">
    <property type="entry name" value="E3 ubiquitin-protein ligase TRIM71"/>
    <property type="match status" value="1"/>
</dbReference>
<dbReference type="FunFam" id="2.60.40.10:FF:000527">
    <property type="entry name" value="E3 ubiquitin-protein ligase TRIM71"/>
    <property type="match status" value="1"/>
</dbReference>
<dbReference type="FunFam" id="3.30.160.60:FF:000923">
    <property type="entry name" value="E3 ubiquitin-protein ligase TRIM71"/>
    <property type="match status" value="1"/>
</dbReference>
<dbReference type="FunFam" id="3.30.40.10:FF:000398">
    <property type="entry name" value="E3 ubiquitin-protein ligase TRIM71"/>
    <property type="match status" value="1"/>
</dbReference>
<dbReference type="Gene3D" id="3.30.160.60">
    <property type="entry name" value="Classic Zinc Finger"/>
    <property type="match status" value="1"/>
</dbReference>
<dbReference type="Gene3D" id="2.60.40.10">
    <property type="entry name" value="Immunoglobulins"/>
    <property type="match status" value="1"/>
</dbReference>
<dbReference type="Gene3D" id="2.120.10.30">
    <property type="entry name" value="TolB, C-terminal domain"/>
    <property type="match status" value="3"/>
</dbReference>
<dbReference type="Gene3D" id="3.30.40.10">
    <property type="entry name" value="Zinc/RING finger domain, C3HC4 (zinc finger)"/>
    <property type="match status" value="1"/>
</dbReference>
<dbReference type="InterPro" id="IPR011042">
    <property type="entry name" value="6-blade_b-propeller_TolB-like"/>
</dbReference>
<dbReference type="InterPro" id="IPR017868">
    <property type="entry name" value="Filamin/ABP280_repeat-like"/>
</dbReference>
<dbReference type="InterPro" id="IPR001298">
    <property type="entry name" value="Filamin/ABP280_rpt"/>
</dbReference>
<dbReference type="InterPro" id="IPR013783">
    <property type="entry name" value="Ig-like_fold"/>
</dbReference>
<dbReference type="InterPro" id="IPR014756">
    <property type="entry name" value="Ig_E-set"/>
</dbReference>
<dbReference type="InterPro" id="IPR001258">
    <property type="entry name" value="NHL_repeat"/>
</dbReference>
<dbReference type="InterPro" id="IPR050952">
    <property type="entry name" value="TRIM-NHL_E3_ligases"/>
</dbReference>
<dbReference type="InterPro" id="IPR000315">
    <property type="entry name" value="Znf_B-box"/>
</dbReference>
<dbReference type="InterPro" id="IPR018957">
    <property type="entry name" value="Znf_C3HC4_RING-type"/>
</dbReference>
<dbReference type="InterPro" id="IPR001841">
    <property type="entry name" value="Znf_RING"/>
</dbReference>
<dbReference type="InterPro" id="IPR013083">
    <property type="entry name" value="Znf_RING/FYVE/PHD"/>
</dbReference>
<dbReference type="InterPro" id="IPR017907">
    <property type="entry name" value="Znf_RING_CS"/>
</dbReference>
<dbReference type="PANTHER" id="PTHR24104:SF53">
    <property type="match status" value="1"/>
</dbReference>
<dbReference type="PANTHER" id="PTHR24104">
    <property type="entry name" value="E3 UBIQUITIN-PROTEIN LIGASE NHLRC1-RELATED"/>
    <property type="match status" value="1"/>
</dbReference>
<dbReference type="Pfam" id="PF00630">
    <property type="entry name" value="Filamin"/>
    <property type="match status" value="1"/>
</dbReference>
<dbReference type="Pfam" id="PF01436">
    <property type="entry name" value="NHL"/>
    <property type="match status" value="6"/>
</dbReference>
<dbReference type="Pfam" id="PF00643">
    <property type="entry name" value="zf-B_box"/>
    <property type="match status" value="1"/>
</dbReference>
<dbReference type="Pfam" id="PF00097">
    <property type="entry name" value="zf-C3HC4"/>
    <property type="match status" value="1"/>
</dbReference>
<dbReference type="SMART" id="SM00336">
    <property type="entry name" value="BBOX"/>
    <property type="match status" value="2"/>
</dbReference>
<dbReference type="SMART" id="SM00557">
    <property type="entry name" value="IG_FLMN"/>
    <property type="match status" value="1"/>
</dbReference>
<dbReference type="SMART" id="SM00184">
    <property type="entry name" value="RING"/>
    <property type="match status" value="1"/>
</dbReference>
<dbReference type="SUPFAM" id="SSF57845">
    <property type="entry name" value="B-box zinc-binding domain"/>
    <property type="match status" value="1"/>
</dbReference>
<dbReference type="SUPFAM" id="SSF81296">
    <property type="entry name" value="E set domains"/>
    <property type="match status" value="1"/>
</dbReference>
<dbReference type="SUPFAM" id="SSF101898">
    <property type="entry name" value="NHL repeat"/>
    <property type="match status" value="1"/>
</dbReference>
<dbReference type="SUPFAM" id="SSF57850">
    <property type="entry name" value="RING/U-box"/>
    <property type="match status" value="1"/>
</dbReference>
<dbReference type="PROSITE" id="PS50194">
    <property type="entry name" value="FILAMIN_REPEAT"/>
    <property type="match status" value="1"/>
</dbReference>
<dbReference type="PROSITE" id="PS51125">
    <property type="entry name" value="NHL"/>
    <property type="match status" value="6"/>
</dbReference>
<dbReference type="PROSITE" id="PS50119">
    <property type="entry name" value="ZF_BBOX"/>
    <property type="match status" value="1"/>
</dbReference>
<dbReference type="PROSITE" id="PS00518">
    <property type="entry name" value="ZF_RING_1"/>
    <property type="match status" value="1"/>
</dbReference>
<dbReference type="PROSITE" id="PS50089">
    <property type="entry name" value="ZF_RING_2"/>
    <property type="match status" value="1"/>
</dbReference>
<feature type="initiator methionine" description="Removed" evidence="1">
    <location>
        <position position="1"/>
    </location>
</feature>
<feature type="chain" id="PRO_0000279512" description="E3 ubiquitin-protein ligase TRIM71">
    <location>
        <begin position="2"/>
        <end position="855"/>
    </location>
</feature>
<feature type="repeat" description="Filamin">
    <location>
        <begin position="466"/>
        <end position="567"/>
    </location>
</feature>
<feature type="repeat" description="NHL 1">
    <location>
        <begin position="580"/>
        <end position="623"/>
    </location>
</feature>
<feature type="repeat" description="NHL 2">
    <location>
        <begin position="627"/>
        <end position="670"/>
    </location>
</feature>
<feature type="repeat" description="NHL 3">
    <location>
        <begin position="674"/>
        <end position="717"/>
    </location>
</feature>
<feature type="repeat" description="NHL 4">
    <location>
        <begin position="721"/>
        <end position="764"/>
    </location>
</feature>
<feature type="repeat" description="NHL 5">
    <location>
        <begin position="768"/>
        <end position="811"/>
    </location>
</feature>
<feature type="repeat" description="NHL 6">
    <location>
        <begin position="815"/>
        <end position="855"/>
    </location>
</feature>
<feature type="zinc finger region" description="RING-type" evidence="4">
    <location>
        <begin position="12"/>
        <end position="94"/>
    </location>
</feature>
<feature type="zinc finger region" description="B box-type 1; atypical" evidence="3">
    <location>
        <begin position="181"/>
        <end position="228"/>
    </location>
</feature>
<feature type="zinc finger region" description="B box-type 2" evidence="3">
    <location>
        <begin position="260"/>
        <end position="301"/>
    </location>
</feature>
<feature type="region of interest" description="Disordered" evidence="5">
    <location>
        <begin position="26"/>
        <end position="48"/>
    </location>
</feature>
<feature type="region of interest" description="Disordered" evidence="5">
    <location>
        <begin position="127"/>
        <end position="177"/>
    </location>
</feature>
<feature type="coiled-coil region" evidence="2">
    <location>
        <begin position="314"/>
        <end position="352"/>
    </location>
</feature>
<feature type="coiled-coil region" evidence="2">
    <location>
        <begin position="378"/>
        <end position="411"/>
    </location>
</feature>
<feature type="compositionally biased region" description="Low complexity" evidence="5">
    <location>
        <begin position="26"/>
        <end position="42"/>
    </location>
</feature>
<feature type="compositionally biased region" description="Gly residues" evidence="5">
    <location>
        <begin position="135"/>
        <end position="145"/>
    </location>
</feature>
<feature type="compositionally biased region" description="Basic residues" evidence="5">
    <location>
        <begin position="147"/>
        <end position="157"/>
    </location>
</feature>
<feature type="binding site" evidence="3">
    <location>
        <position position="265"/>
    </location>
    <ligand>
        <name>Zn(2+)</name>
        <dbReference type="ChEBI" id="CHEBI:29105"/>
    </ligand>
</feature>
<feature type="binding site" evidence="3">
    <location>
        <position position="268"/>
    </location>
    <ligand>
        <name>Zn(2+)</name>
        <dbReference type="ChEBI" id="CHEBI:29105"/>
    </ligand>
</feature>
<feature type="binding site" evidence="3">
    <location>
        <position position="288"/>
    </location>
    <ligand>
        <name>Zn(2+)</name>
        <dbReference type="ChEBI" id="CHEBI:29105"/>
    </ligand>
</feature>
<feature type="binding site" evidence="3">
    <location>
        <position position="293"/>
    </location>
    <ligand>
        <name>Zn(2+)</name>
        <dbReference type="ChEBI" id="CHEBI:29105"/>
    </ligand>
</feature>
<feature type="modified residue" description="N-acetylalanine" evidence="1">
    <location>
        <position position="2"/>
    </location>
</feature>
<feature type="mutagenesis site" description="Abolishes E3 ubiquitin-protein ligase activity; when associated with A-15." evidence="9">
    <original>C</original>
    <variation>L</variation>
    <location>
        <position position="12"/>
    </location>
</feature>
<feature type="mutagenesis site" description="Abolishes E3 ubiquitin-protein ligase activity; when associated with L-12." evidence="9">
    <original>C</original>
    <variation>A</variation>
    <location>
        <position position="15"/>
    </location>
</feature>
<feature type="strand" evidence="18">
    <location>
        <begin position="586"/>
        <end position="589"/>
    </location>
</feature>
<feature type="strand" evidence="18">
    <location>
        <begin position="593"/>
        <end position="595"/>
    </location>
</feature>
<feature type="strand" evidence="18">
    <location>
        <begin position="599"/>
        <end position="601"/>
    </location>
</feature>
<feature type="strand" evidence="18">
    <location>
        <begin position="607"/>
        <end position="611"/>
    </location>
</feature>
<feature type="turn" evidence="18">
    <location>
        <begin position="612"/>
        <end position="615"/>
    </location>
</feature>
<feature type="strand" evidence="18">
    <location>
        <begin position="616"/>
        <end position="620"/>
    </location>
</feature>
<feature type="strand" evidence="18">
    <location>
        <begin position="626"/>
        <end position="630"/>
    </location>
</feature>
<feature type="strand" evidence="18">
    <location>
        <begin position="632"/>
        <end position="636"/>
    </location>
</feature>
<feature type="strand" evidence="18">
    <location>
        <begin position="639"/>
        <end position="642"/>
    </location>
</feature>
<feature type="strand" evidence="18">
    <location>
        <begin position="646"/>
        <end position="648"/>
    </location>
</feature>
<feature type="strand" evidence="18">
    <location>
        <begin position="654"/>
        <end position="658"/>
    </location>
</feature>
<feature type="turn" evidence="18">
    <location>
        <begin position="659"/>
        <end position="662"/>
    </location>
</feature>
<feature type="strand" evidence="18">
    <location>
        <begin position="663"/>
        <end position="667"/>
    </location>
</feature>
<feature type="strand" evidence="18">
    <location>
        <begin position="673"/>
        <end position="677"/>
    </location>
</feature>
<feature type="strand" evidence="18">
    <location>
        <begin position="680"/>
        <end position="683"/>
    </location>
</feature>
<feature type="strand" evidence="18">
    <location>
        <begin position="687"/>
        <end position="695"/>
    </location>
</feature>
<feature type="strand" evidence="18">
    <location>
        <begin position="701"/>
        <end position="705"/>
    </location>
</feature>
<feature type="turn" evidence="18">
    <location>
        <begin position="706"/>
        <end position="709"/>
    </location>
</feature>
<feature type="strand" evidence="18">
    <location>
        <begin position="710"/>
        <end position="714"/>
    </location>
</feature>
<feature type="strand" evidence="18">
    <location>
        <begin position="720"/>
        <end position="725"/>
    </location>
</feature>
<feature type="turn" evidence="18">
    <location>
        <begin position="729"/>
        <end position="733"/>
    </location>
</feature>
<feature type="strand" evidence="18">
    <location>
        <begin position="737"/>
        <end position="742"/>
    </location>
</feature>
<feature type="strand" evidence="18">
    <location>
        <begin position="748"/>
        <end position="752"/>
    </location>
</feature>
<feature type="turn" evidence="18">
    <location>
        <begin position="753"/>
        <end position="756"/>
    </location>
</feature>
<feature type="strand" evidence="18">
    <location>
        <begin position="757"/>
        <end position="761"/>
    </location>
</feature>
<feature type="strand" evidence="18">
    <location>
        <begin position="768"/>
        <end position="771"/>
    </location>
</feature>
<feature type="strand" evidence="18">
    <location>
        <begin position="773"/>
        <end position="777"/>
    </location>
</feature>
<feature type="strand" evidence="18">
    <location>
        <begin position="780"/>
        <end position="789"/>
    </location>
</feature>
<feature type="strand" evidence="18">
    <location>
        <begin position="795"/>
        <end position="799"/>
    </location>
</feature>
<feature type="helix" evidence="18">
    <location>
        <begin position="800"/>
        <end position="802"/>
    </location>
</feature>
<feature type="strand" evidence="18">
    <location>
        <begin position="805"/>
        <end position="808"/>
    </location>
</feature>
<feature type="strand" evidence="18">
    <location>
        <begin position="814"/>
        <end position="818"/>
    </location>
</feature>
<feature type="strand" evidence="18">
    <location>
        <begin position="820"/>
        <end position="824"/>
    </location>
</feature>
<feature type="strand" evidence="18">
    <location>
        <begin position="827"/>
        <end position="836"/>
    </location>
</feature>
<feature type="strand" evidence="18">
    <location>
        <begin position="842"/>
        <end position="846"/>
    </location>
</feature>
<feature type="turn" evidence="18">
    <location>
        <begin position="847"/>
        <end position="850"/>
    </location>
</feature>
<feature type="strand" evidence="18">
    <location>
        <begin position="851"/>
        <end position="854"/>
    </location>
</feature>
<gene>
    <name type="primary">Trim71</name>
    <name type="synonym">Gm1127</name>
    <name type="synonym">Lin41</name>
</gene>
<keyword id="KW-0002">3D-structure</keyword>
<keyword id="KW-0007">Acetylation</keyword>
<keyword id="KW-0175">Coiled coil</keyword>
<keyword id="KW-0963">Cytoplasm</keyword>
<keyword id="KW-0217">Developmental protein</keyword>
<keyword id="KW-0479">Metal-binding</keyword>
<keyword id="KW-1185">Reference proteome</keyword>
<keyword id="KW-0677">Repeat</keyword>
<keyword id="KW-0694">RNA-binding</keyword>
<keyword id="KW-0943">RNA-mediated gene silencing</keyword>
<keyword id="KW-0808">Transferase</keyword>
<keyword id="KW-0832">Ubl conjugation</keyword>
<keyword id="KW-0833">Ubl conjugation pathway</keyword>
<keyword id="KW-0862">Zinc</keyword>
<keyword id="KW-0863">Zinc-finger</keyword>
<proteinExistence type="evidence at protein level"/>
<name>LIN41_MOUSE</name>
<reference key="1">
    <citation type="journal article" date="2006" name="Dev. Dyn.">
        <title>Cloning and regulation of the vertebrate homologue of lin-41 that functions as a heterochronic gene in Caenorhabditis elegans.</title>
        <authorList>
            <person name="Kanamoto T."/>
            <person name="Terada K."/>
            <person name="Yoshikawa H."/>
            <person name="Furukawa T."/>
        </authorList>
    </citation>
    <scope>NUCLEOTIDE SEQUENCE [MRNA]</scope>
    <scope>DEVELOPMENTAL STAGE</scope>
</reference>
<reference key="2">
    <citation type="journal article" date="2005" name="Dev. Dyn.">
        <title>Analysis of the regulation of lin-41 during chick and mouse limb development.</title>
        <authorList>
            <person name="Lancman J.J."/>
            <person name="Caruccio N.C."/>
            <person name="Harfe B.D."/>
            <person name="Pasquinelli A.E."/>
            <person name="Schageman J.J."/>
            <person name="Pertsemlidis A."/>
            <person name="Fallon J.F."/>
        </authorList>
    </citation>
    <scope>IDENTIFICATION</scope>
</reference>
<reference key="3">
    <citation type="journal article" date="2005" name="Dev. Dyn.">
        <title>Reciprocal expression of lin-41 and the microRNAs let-7 and mir-125 during mouse embryogenesis.</title>
        <authorList>
            <person name="Maller Schulman B.R."/>
            <person name="Esquela-Kerscher A."/>
            <person name="Slack F.J."/>
        </authorList>
    </citation>
    <scope>IDENTIFICATION</scope>
    <scope>DEVELOPMENTAL STAGE</scope>
</reference>
<reference key="4">
    <citation type="journal article" date="2008" name="Cell Cycle">
        <title>The let-7 microRNA target gene, Mlin41/Trim71 is required for mouse embryonic survival and neural tube closure.</title>
        <authorList>
            <person name="Maller Schulman B.R."/>
            <person name="Liang X."/>
            <person name="Stahlhut C."/>
            <person name="DelConte C."/>
            <person name="Stefani G."/>
            <person name="Slack F.J."/>
        </authorList>
    </citation>
    <scope>DISRUPTION PHENOTYPE</scope>
</reference>
<reference key="5">
    <citation type="journal article" date="2009" name="Nat. Cell Biol.">
        <title>The let-7 target gene mouse lin-41 is a stem cell specific E3 ubiquitin ligase for the miRNA pathway protein Ago2.</title>
        <authorList>
            <person name="Rybak A."/>
            <person name="Fuchs H."/>
            <person name="Hadian K."/>
            <person name="Smirnova L."/>
            <person name="Wulczyn E.A."/>
            <person name="Michel G."/>
            <person name="Nitsch R."/>
            <person name="Krappmann D."/>
            <person name="Wulczyn F.G."/>
        </authorList>
    </citation>
    <scope>FUNCTION</scope>
    <scope>SUBCELLULAR LOCATION</scope>
    <scope>TISSUE SPECIFICITY</scope>
    <scope>INTERACTION WITH AGO2</scope>
    <scope>MUTAGENESIS OF CYS-12 AND CYS-15</scope>
</reference>
<reference key="6">
    <citation type="journal article" date="2012" name="Genes Dev.">
        <title>The ubiquitin ligase mLin41 temporally promotes neural progenitor cell maintenance through FGF signaling.</title>
        <authorList>
            <person name="Chen J."/>
            <person name="Lai F."/>
            <person name="Niswander L."/>
        </authorList>
    </citation>
    <scope>FUNCTION</scope>
    <scope>SUBCELLULAR LOCATION</scope>
    <scope>TISSUE SPECIFICITY</scope>
    <scope>DISRUPTION PHENOTYPE</scope>
    <scope>AUTOUBIQUITINATION</scope>
    <scope>INTERACTION WITH AGO2 AND SHCBP1</scope>
</reference>
<reference key="7">
    <citation type="journal article" date="2012" name="Nat. Commun.">
        <title>Trim71 cooperates with microRNAs to repress Cdkn1a expression and promote embryonic stem cell proliferation.</title>
        <authorList>
            <person name="Chang H.M."/>
            <person name="Martinez N.J."/>
            <person name="Thornton J.E."/>
            <person name="Hagan J.P."/>
            <person name="Nguyen K.D."/>
            <person name="Gregory R.I."/>
        </authorList>
    </citation>
    <scope>FUNCTION</scope>
    <scope>RNA-BINDING</scope>
    <scope>SUBCELLULAR LOCATION</scope>
    <scope>INTERACTION WITH AGO2</scope>
    <scope>TISSUE SPECIFICITY</scope>
    <scope>INDUCTION</scope>
</reference>
<reference key="8">
    <citation type="journal article" date="2013" name="Nucleic Acids Res.">
        <title>The mammalian TRIM-NHL protein TRIM71/LIN-41 is a repressor of mRNA function.</title>
        <authorList>
            <person name="Loedige I."/>
            <person name="Gaidatzis D."/>
            <person name="Sack R."/>
            <person name="Meister G."/>
            <person name="Filipowicz W."/>
        </authorList>
    </citation>
    <scope>FUNCTION</scope>
</reference>
<reference key="9">
    <citation type="journal article" date="2015" name="Front. Cell Dev. Biol.">
        <title>Lin41/Trim71 is essential for mouse development and specifically expressed in postnatal ependymal cells of the brain.</title>
        <authorList>
            <person name="Cuevas E."/>
            <person name="Rybak-Wolf A."/>
            <person name="Rohde A.M."/>
            <person name="Nguyen D.T."/>
            <person name="Wulczyn F.G."/>
        </authorList>
    </citation>
    <scope>FUNCTION</scope>
    <scope>DISRUPTION PHENOTYPE</scope>
    <scope>TISSUE SPECIFICITY</scope>
    <scope>DEVELOPMENTAL STAGE</scope>
</reference>